<feature type="chain" id="PRO_0000287814" description="Protein translocase subunit SecF">
    <location>
        <begin position="1"/>
        <end position="306"/>
    </location>
</feature>
<feature type="transmembrane region" description="Helical" evidence="1">
    <location>
        <begin position="17"/>
        <end position="37"/>
    </location>
</feature>
<feature type="transmembrane region" description="Helical" evidence="1">
    <location>
        <begin position="134"/>
        <end position="154"/>
    </location>
</feature>
<feature type="transmembrane region" description="Helical" evidence="1">
    <location>
        <begin position="158"/>
        <end position="178"/>
    </location>
</feature>
<feature type="transmembrane region" description="Helical" evidence="1">
    <location>
        <begin position="185"/>
        <end position="205"/>
    </location>
</feature>
<feature type="transmembrane region" description="Helical" evidence="1">
    <location>
        <begin position="232"/>
        <end position="254"/>
    </location>
</feature>
<feature type="transmembrane region" description="Helical" evidence="1">
    <location>
        <begin position="268"/>
        <end position="288"/>
    </location>
</feature>
<protein>
    <recommendedName>
        <fullName>Protein translocase subunit SecF</fullName>
    </recommendedName>
</protein>
<comment type="function">
    <text evidence="1">Part of the Sec protein translocase complex. Interacts with the SecYEG preprotein conducting channel. SecDF uses the proton motive force (PMF) to complete protein translocation after the ATP-dependent function of SecA.</text>
</comment>
<comment type="subunit">
    <text evidence="1">Forms a complex with SecD. Part of the essential Sec protein translocation apparatus which comprises SecA, SecYEG and auxiliary proteins SecDF-YajC and YidC.</text>
</comment>
<comment type="subcellular location">
    <subcellularLocation>
        <location evidence="1">Cell inner membrane</location>
        <topology evidence="1">Multi-pass membrane protein</topology>
    </subcellularLocation>
</comment>
<comment type="similarity">
    <text evidence="1">Belongs to the SecD/SecF family. SecF subfamily.</text>
</comment>
<name>SECF_PSEAE</name>
<gene>
    <name evidence="1" type="primary">secF</name>
    <name type="ordered locus">PA3820</name>
</gene>
<organism>
    <name type="scientific">Pseudomonas aeruginosa (strain ATCC 15692 / DSM 22644 / CIP 104116 / JCM 14847 / LMG 12228 / 1C / PRS 101 / PAO1)</name>
    <dbReference type="NCBI Taxonomy" id="208964"/>
    <lineage>
        <taxon>Bacteria</taxon>
        <taxon>Pseudomonadati</taxon>
        <taxon>Pseudomonadota</taxon>
        <taxon>Gammaproteobacteria</taxon>
        <taxon>Pseudomonadales</taxon>
        <taxon>Pseudomonadaceae</taxon>
        <taxon>Pseudomonas</taxon>
    </lineage>
</organism>
<proteinExistence type="inferred from homology"/>
<keyword id="KW-0997">Cell inner membrane</keyword>
<keyword id="KW-1003">Cell membrane</keyword>
<keyword id="KW-0472">Membrane</keyword>
<keyword id="KW-0653">Protein transport</keyword>
<keyword id="KW-1185">Reference proteome</keyword>
<keyword id="KW-0811">Translocation</keyword>
<keyword id="KW-0812">Transmembrane</keyword>
<keyword id="KW-1133">Transmembrane helix</keyword>
<keyword id="KW-0813">Transport</keyword>
<evidence type="ECO:0000255" key="1">
    <source>
        <dbReference type="HAMAP-Rule" id="MF_01464"/>
    </source>
</evidence>
<accession>Q9HXI2</accession>
<dbReference type="EMBL" id="AE004091">
    <property type="protein sequence ID" value="AAG07207.1"/>
    <property type="molecule type" value="Genomic_DNA"/>
</dbReference>
<dbReference type="PIR" id="E83169">
    <property type="entry name" value="E83169"/>
</dbReference>
<dbReference type="RefSeq" id="NP_252509.1">
    <property type="nucleotide sequence ID" value="NC_002516.2"/>
</dbReference>
<dbReference type="RefSeq" id="WP_003100612.1">
    <property type="nucleotide sequence ID" value="NZ_QZGE01000001.1"/>
</dbReference>
<dbReference type="SMR" id="Q9HXI2"/>
<dbReference type="FunCoup" id="Q9HXI2">
    <property type="interactions" value="299"/>
</dbReference>
<dbReference type="STRING" id="208964.PA3820"/>
<dbReference type="PaxDb" id="208964-PA3820"/>
<dbReference type="GeneID" id="879904"/>
<dbReference type="KEGG" id="pae:PA3820"/>
<dbReference type="PATRIC" id="fig|208964.12.peg.3999"/>
<dbReference type="PseudoCAP" id="PA3820"/>
<dbReference type="HOGENOM" id="CLU_050012_1_0_6"/>
<dbReference type="InParanoid" id="Q9HXI2"/>
<dbReference type="OrthoDB" id="9774769at2"/>
<dbReference type="PhylomeDB" id="Q9HXI2"/>
<dbReference type="BioCyc" id="PAER208964:G1FZ6-3891-MONOMER"/>
<dbReference type="Proteomes" id="UP000002438">
    <property type="component" value="Chromosome"/>
</dbReference>
<dbReference type="GO" id="GO:0005886">
    <property type="term" value="C:plasma membrane"/>
    <property type="evidence" value="ECO:0000318"/>
    <property type="project" value="GO_Central"/>
</dbReference>
<dbReference type="GO" id="GO:0015450">
    <property type="term" value="F:protein-transporting ATPase activity"/>
    <property type="evidence" value="ECO:0007669"/>
    <property type="project" value="InterPro"/>
</dbReference>
<dbReference type="GO" id="GO:0065002">
    <property type="term" value="P:intracellular protein transmembrane transport"/>
    <property type="evidence" value="ECO:0007669"/>
    <property type="project" value="UniProtKB-UniRule"/>
</dbReference>
<dbReference type="GO" id="GO:0006605">
    <property type="term" value="P:protein targeting"/>
    <property type="evidence" value="ECO:0007669"/>
    <property type="project" value="UniProtKB-UniRule"/>
</dbReference>
<dbReference type="GO" id="GO:0015031">
    <property type="term" value="P:protein transport"/>
    <property type="evidence" value="ECO:0000318"/>
    <property type="project" value="GO_Central"/>
</dbReference>
<dbReference type="GO" id="GO:0043952">
    <property type="term" value="P:protein transport by the Sec complex"/>
    <property type="evidence" value="ECO:0007669"/>
    <property type="project" value="UniProtKB-UniRule"/>
</dbReference>
<dbReference type="FunFam" id="1.20.1640.10:FF:000006">
    <property type="entry name" value="Protein-export membrane protein SecF"/>
    <property type="match status" value="1"/>
</dbReference>
<dbReference type="Gene3D" id="1.20.1640.10">
    <property type="entry name" value="Multidrug efflux transporter AcrB transmembrane domain"/>
    <property type="match status" value="1"/>
</dbReference>
<dbReference type="HAMAP" id="MF_01464_B">
    <property type="entry name" value="SecF_B"/>
    <property type="match status" value="1"/>
</dbReference>
<dbReference type="InterPro" id="IPR022813">
    <property type="entry name" value="SecD/SecF_arch_bac"/>
</dbReference>
<dbReference type="InterPro" id="IPR022645">
    <property type="entry name" value="SecD/SecF_bac"/>
</dbReference>
<dbReference type="InterPro" id="IPR022646">
    <property type="entry name" value="SecD/SecF_CS"/>
</dbReference>
<dbReference type="InterPro" id="IPR048634">
    <property type="entry name" value="SecD_SecF_C"/>
</dbReference>
<dbReference type="InterPro" id="IPR055344">
    <property type="entry name" value="SecD_SecF_C_bact"/>
</dbReference>
<dbReference type="InterPro" id="IPR005665">
    <property type="entry name" value="SecF_bac"/>
</dbReference>
<dbReference type="NCBIfam" id="TIGR00916">
    <property type="entry name" value="2A0604s01"/>
    <property type="match status" value="1"/>
</dbReference>
<dbReference type="NCBIfam" id="TIGR00966">
    <property type="entry name" value="transloc_SecF"/>
    <property type="match status" value="1"/>
</dbReference>
<dbReference type="PANTHER" id="PTHR30081:SF8">
    <property type="entry name" value="PROTEIN TRANSLOCASE SUBUNIT SECF"/>
    <property type="match status" value="1"/>
</dbReference>
<dbReference type="PANTHER" id="PTHR30081">
    <property type="entry name" value="PROTEIN-EXPORT MEMBRANE PROTEIN SEC"/>
    <property type="match status" value="1"/>
</dbReference>
<dbReference type="Pfam" id="PF07549">
    <property type="entry name" value="Sec_GG"/>
    <property type="match status" value="1"/>
</dbReference>
<dbReference type="Pfam" id="PF02355">
    <property type="entry name" value="SecD_SecF_C"/>
    <property type="match status" value="1"/>
</dbReference>
<dbReference type="PRINTS" id="PR01755">
    <property type="entry name" value="SECFTRNLCASE"/>
</dbReference>
<dbReference type="SUPFAM" id="SSF82866">
    <property type="entry name" value="Multidrug efflux transporter AcrB transmembrane domain"/>
    <property type="match status" value="1"/>
</dbReference>
<reference key="1">
    <citation type="journal article" date="2000" name="Nature">
        <title>Complete genome sequence of Pseudomonas aeruginosa PAO1, an opportunistic pathogen.</title>
        <authorList>
            <person name="Stover C.K."/>
            <person name="Pham X.-Q.T."/>
            <person name="Erwin A.L."/>
            <person name="Mizoguchi S.D."/>
            <person name="Warrener P."/>
            <person name="Hickey M.J."/>
            <person name="Brinkman F.S.L."/>
            <person name="Hufnagle W.O."/>
            <person name="Kowalik D.J."/>
            <person name="Lagrou M."/>
            <person name="Garber R.L."/>
            <person name="Goltry L."/>
            <person name="Tolentino E."/>
            <person name="Westbrock-Wadman S."/>
            <person name="Yuan Y."/>
            <person name="Brody L.L."/>
            <person name="Coulter S.N."/>
            <person name="Folger K.R."/>
            <person name="Kas A."/>
            <person name="Larbig K."/>
            <person name="Lim R.M."/>
            <person name="Smith K.A."/>
            <person name="Spencer D.H."/>
            <person name="Wong G.K.-S."/>
            <person name="Wu Z."/>
            <person name="Paulsen I.T."/>
            <person name="Reizer J."/>
            <person name="Saier M.H. Jr."/>
            <person name="Hancock R.E.W."/>
            <person name="Lory S."/>
            <person name="Olson M.V."/>
        </authorList>
    </citation>
    <scope>NUCLEOTIDE SEQUENCE [LARGE SCALE GENOMIC DNA]</scope>
    <source>
        <strain>ATCC 15692 / DSM 22644 / CIP 104116 / JCM 14847 / LMG 12228 / 1C / PRS 101 / PAO1</strain>
    </source>
</reference>
<sequence length="306" mass="33041">MNIKIGTINFMGIRNVAFAVTLILTVIALGSWFTKGINFGLDFTGGTLIELTYEQPADLGKVRGQLVGAGYEDAVVQSFGDARDVLVRMPSEDPELGKKVATALQQADAGNPANLKRVEYVGPQVGEELRDQGGLGMLLALGGILLYVGFRFQWKFALGAILSLVHDAIIVMGVLSFFQVTFDLTVLAAVLAVVGYSLNDTIVIFDRVRENFRVLRKADLVENLNISTSQTLLRTIATSVSTLLAIAALLFFGGDNLFGFSIALFVGVMAGTYSSIYIANVVLIWLNLTSEDLIPPQAKDTVDDRP</sequence>